<comment type="function">
    <text evidence="1">Required for proper 34S pre-rRNA processing and 60S ribosome subunit assembly.</text>
</comment>
<comment type="subunit">
    <text evidence="1">Monomer. Interacts with pre-ribosome complex. May bind to RNA. Interacts with NOL8. Interacts with FTSJ3 (By similarity).</text>
</comment>
<comment type="subcellular location">
    <subcellularLocation>
        <location evidence="1">Nucleus</location>
        <location evidence="1">Nucleolus</location>
    </subcellularLocation>
</comment>
<comment type="similarity">
    <text evidence="3">Belongs to the NIP7 family.</text>
</comment>
<proteinExistence type="inferred from homology"/>
<name>NIP7_TETNG</name>
<evidence type="ECO:0000250" key="1"/>
<evidence type="ECO:0000255" key="2">
    <source>
        <dbReference type="PROSITE-ProRule" id="PRU00161"/>
    </source>
</evidence>
<evidence type="ECO:0000305" key="3"/>
<dbReference type="EMBL" id="CAAE01010152">
    <property type="protein sequence ID" value="CAF92754.1"/>
    <property type="molecule type" value="Genomic_DNA"/>
</dbReference>
<dbReference type="SMR" id="Q4T2X8"/>
<dbReference type="FunCoup" id="Q4T2X8">
    <property type="interactions" value="964"/>
</dbReference>
<dbReference type="STRING" id="99883.ENSTNIP00000007313"/>
<dbReference type="Ensembl" id="ENSTNIT00000007471.1">
    <property type="protein sequence ID" value="ENSTNIP00000007313.1"/>
    <property type="gene ID" value="ENSTNIG00000004660.1"/>
</dbReference>
<dbReference type="KEGG" id="tng:GSTEN00008117G001"/>
<dbReference type="GeneTree" id="ENSGT00950000182971"/>
<dbReference type="HOGENOM" id="CLU_097217_0_0_1"/>
<dbReference type="InParanoid" id="Q4T2X8"/>
<dbReference type="OMA" id="LISMGTC"/>
<dbReference type="OrthoDB" id="27490at2759"/>
<dbReference type="TreeFam" id="TF300081"/>
<dbReference type="Proteomes" id="UP000007303">
    <property type="component" value="Unassembled WGS sequence"/>
</dbReference>
<dbReference type="GO" id="GO:0005730">
    <property type="term" value="C:nucleolus"/>
    <property type="evidence" value="ECO:0007669"/>
    <property type="project" value="UniProtKB-SubCell"/>
</dbReference>
<dbReference type="GO" id="GO:0003723">
    <property type="term" value="F:RNA binding"/>
    <property type="evidence" value="ECO:0007669"/>
    <property type="project" value="UniProtKB-KW"/>
</dbReference>
<dbReference type="GO" id="GO:0042255">
    <property type="term" value="P:ribosome assembly"/>
    <property type="evidence" value="ECO:0007669"/>
    <property type="project" value="InterPro"/>
</dbReference>
<dbReference type="CDD" id="cd21146">
    <property type="entry name" value="Nip7_N_euk"/>
    <property type="match status" value="1"/>
</dbReference>
<dbReference type="CDD" id="cd21151">
    <property type="entry name" value="PUA_Nip7-like"/>
    <property type="match status" value="1"/>
</dbReference>
<dbReference type="FunFam" id="2.30.130.10:FF:000002">
    <property type="entry name" value="60S ribosome subunit biogenesis protein NIP7 homolog"/>
    <property type="match status" value="1"/>
</dbReference>
<dbReference type="FunFam" id="3.10.450.220:FF:000001">
    <property type="entry name" value="60S ribosome subunit biogenesis protein NIP7 homolog"/>
    <property type="match status" value="1"/>
</dbReference>
<dbReference type="Gene3D" id="3.10.450.220">
    <property type="match status" value="1"/>
</dbReference>
<dbReference type="Gene3D" id="2.30.130.10">
    <property type="entry name" value="PUA domain"/>
    <property type="match status" value="1"/>
</dbReference>
<dbReference type="InterPro" id="IPR040598">
    <property type="entry name" value="NIP7_N"/>
</dbReference>
<dbReference type="InterPro" id="IPR055359">
    <property type="entry name" value="Nip7_N_euk"/>
</dbReference>
<dbReference type="InterPro" id="IPR002478">
    <property type="entry name" value="PUA"/>
</dbReference>
<dbReference type="InterPro" id="IPR015947">
    <property type="entry name" value="PUA-like_sf"/>
</dbReference>
<dbReference type="InterPro" id="IPR036974">
    <property type="entry name" value="PUA_sf"/>
</dbReference>
<dbReference type="InterPro" id="IPR016686">
    <property type="entry name" value="Ribosomal_synth_fac_NIP7"/>
</dbReference>
<dbReference type="InterPro" id="IPR005155">
    <property type="entry name" value="UPF0113_PUA"/>
</dbReference>
<dbReference type="PANTHER" id="PTHR23415">
    <property type="entry name" value="CYCLIN-DEPENDENT KINASES REGULATORY SUBUNIT/60S RIBOSOME SUBUNIT BIOGENESIS PROTEIN NIP7"/>
    <property type="match status" value="1"/>
</dbReference>
<dbReference type="Pfam" id="PF17833">
    <property type="entry name" value="pre-PUA_NIP7"/>
    <property type="match status" value="1"/>
</dbReference>
<dbReference type="Pfam" id="PF03657">
    <property type="entry name" value="UPF0113"/>
    <property type="match status" value="1"/>
</dbReference>
<dbReference type="PIRSF" id="PIRSF017190">
    <property type="entry name" value="Rbsml_synth_fac_NIP7"/>
    <property type="match status" value="1"/>
</dbReference>
<dbReference type="SMART" id="SM00359">
    <property type="entry name" value="PUA"/>
    <property type="match status" value="1"/>
</dbReference>
<dbReference type="SUPFAM" id="SSF88802">
    <property type="entry name" value="Pre-PUA domain"/>
    <property type="match status" value="1"/>
</dbReference>
<dbReference type="SUPFAM" id="SSF88697">
    <property type="entry name" value="PUA domain-like"/>
    <property type="match status" value="1"/>
</dbReference>
<dbReference type="PROSITE" id="PS50890">
    <property type="entry name" value="PUA"/>
    <property type="match status" value="1"/>
</dbReference>
<accession>Q4T2X8</accession>
<sequence>MRPLTEEETKTMFEKLSKYIGENIKLLVDRPDGTYCFRLHNDRVYYMSERILKLATNIARQKLVSVGTCFGKFTKTSKFRLHITALDFLAPYAKFKVWVKPGAEQSFLYGNHVLKSGLGRITENTAQYQGVVVYSMADVPLGFGVAAKSTQECRRVDPMSIVVFHQADVGEFIRNEDSLT</sequence>
<organism>
    <name type="scientific">Tetraodon nigroviridis</name>
    <name type="common">Spotted green pufferfish</name>
    <name type="synonym">Chelonodon nigroviridis</name>
    <dbReference type="NCBI Taxonomy" id="99883"/>
    <lineage>
        <taxon>Eukaryota</taxon>
        <taxon>Metazoa</taxon>
        <taxon>Chordata</taxon>
        <taxon>Craniata</taxon>
        <taxon>Vertebrata</taxon>
        <taxon>Euteleostomi</taxon>
        <taxon>Actinopterygii</taxon>
        <taxon>Neopterygii</taxon>
        <taxon>Teleostei</taxon>
        <taxon>Neoteleostei</taxon>
        <taxon>Acanthomorphata</taxon>
        <taxon>Eupercaria</taxon>
        <taxon>Tetraodontiformes</taxon>
        <taxon>Tetradontoidea</taxon>
        <taxon>Tetraodontidae</taxon>
        <taxon>Tetraodon</taxon>
    </lineage>
</organism>
<feature type="chain" id="PRO_0000355568" description="60S ribosome subunit biogenesis protein NIP7 homolog">
    <location>
        <begin position="1"/>
        <end position="180"/>
    </location>
</feature>
<feature type="domain" description="PUA" evidence="2">
    <location>
        <begin position="94"/>
        <end position="170"/>
    </location>
</feature>
<feature type="region of interest" description="N-terminal domain" evidence="1">
    <location>
        <begin position="1"/>
        <end position="92"/>
    </location>
</feature>
<feature type="region of interest" description="C-terminal domain" evidence="1">
    <location>
        <begin position="93"/>
        <end position="180"/>
    </location>
</feature>
<keyword id="KW-0539">Nucleus</keyword>
<keyword id="KW-1185">Reference proteome</keyword>
<keyword id="KW-0690">Ribosome biogenesis</keyword>
<keyword id="KW-0694">RNA-binding</keyword>
<protein>
    <recommendedName>
        <fullName>60S ribosome subunit biogenesis protein NIP7 homolog</fullName>
    </recommendedName>
</protein>
<reference key="1">
    <citation type="journal article" date="2004" name="Nature">
        <title>Genome duplication in the teleost fish Tetraodon nigroviridis reveals the early vertebrate proto-karyotype.</title>
        <authorList>
            <person name="Jaillon O."/>
            <person name="Aury J.-M."/>
            <person name="Brunet F."/>
            <person name="Petit J.-L."/>
            <person name="Stange-Thomann N."/>
            <person name="Mauceli E."/>
            <person name="Bouneau L."/>
            <person name="Fischer C."/>
            <person name="Ozouf-Costaz C."/>
            <person name="Bernot A."/>
            <person name="Nicaud S."/>
            <person name="Jaffe D."/>
            <person name="Fisher S."/>
            <person name="Lutfalla G."/>
            <person name="Dossat C."/>
            <person name="Segurens B."/>
            <person name="Dasilva C."/>
            <person name="Salanoubat M."/>
            <person name="Levy M."/>
            <person name="Boudet N."/>
            <person name="Castellano S."/>
            <person name="Anthouard V."/>
            <person name="Jubin C."/>
            <person name="Castelli V."/>
            <person name="Katinka M."/>
            <person name="Vacherie B."/>
            <person name="Biemont C."/>
            <person name="Skalli Z."/>
            <person name="Cattolico L."/>
            <person name="Poulain J."/>
            <person name="De Berardinis V."/>
            <person name="Cruaud C."/>
            <person name="Duprat S."/>
            <person name="Brottier P."/>
            <person name="Coutanceau J.-P."/>
            <person name="Gouzy J."/>
            <person name="Parra G."/>
            <person name="Lardier G."/>
            <person name="Chapple C."/>
            <person name="McKernan K.J."/>
            <person name="McEwan P."/>
            <person name="Bosak S."/>
            <person name="Kellis M."/>
            <person name="Volff J.-N."/>
            <person name="Guigo R."/>
            <person name="Zody M.C."/>
            <person name="Mesirov J."/>
            <person name="Lindblad-Toh K."/>
            <person name="Birren B."/>
            <person name="Nusbaum C."/>
            <person name="Kahn D."/>
            <person name="Robinson-Rechavi M."/>
            <person name="Laudet V."/>
            <person name="Schachter V."/>
            <person name="Quetier F."/>
            <person name="Saurin W."/>
            <person name="Scarpelli C."/>
            <person name="Wincker P."/>
            <person name="Lander E.S."/>
            <person name="Weissenbach J."/>
            <person name="Roest Crollius H."/>
        </authorList>
    </citation>
    <scope>NUCLEOTIDE SEQUENCE [LARGE SCALE GENOMIC DNA]</scope>
</reference>
<gene>
    <name type="primary">nip7</name>
    <name type="ORF">GSTENG00008117001</name>
</gene>